<gene>
    <name type="primary">rhtB</name>
    <name type="ordered locus">c4746</name>
</gene>
<evidence type="ECO:0000250" key="1"/>
<evidence type="ECO:0000255" key="2"/>
<evidence type="ECO:0000305" key="3"/>
<keyword id="KW-1003">Cell membrane</keyword>
<keyword id="KW-0472">Membrane</keyword>
<keyword id="KW-1185">Reference proteome</keyword>
<keyword id="KW-0812">Transmembrane</keyword>
<keyword id="KW-1133">Transmembrane helix</keyword>
<keyword id="KW-0813">Transport</keyword>
<proteinExistence type="inferred from homology"/>
<protein>
    <recommendedName>
        <fullName>Homoserine/homoserine lactone efflux protein</fullName>
    </recommendedName>
</protein>
<comment type="function">
    <text evidence="1">Conducts the efflux of homoserine and homoserine lactone.</text>
</comment>
<comment type="subcellular location">
    <subcellularLocation>
        <location evidence="3">Cell membrane</location>
        <topology evidence="3">Multi-pass membrane protein</topology>
    </subcellularLocation>
</comment>
<comment type="similarity">
    <text evidence="3">Belongs to the Rht family.</text>
</comment>
<organism>
    <name type="scientific">Escherichia coli O6:H1 (strain CFT073 / ATCC 700928 / UPEC)</name>
    <dbReference type="NCBI Taxonomy" id="199310"/>
    <lineage>
        <taxon>Bacteria</taxon>
        <taxon>Pseudomonadati</taxon>
        <taxon>Pseudomonadota</taxon>
        <taxon>Gammaproteobacteria</taxon>
        <taxon>Enterobacterales</taxon>
        <taxon>Enterobacteriaceae</taxon>
        <taxon>Escherichia</taxon>
    </lineage>
</organism>
<sequence>MTLEWWFAYLLTSIILSLSPGSGAINTMTTSLNHGYRGAVASIAGLQTGLAIHIVLVGVGLGTLFSRSVIAFEVLKWAGAAYLIWLGIQQWRAAGAIDLKSLASTQSRRHLFQRAVFVNLTNPKSIVFLAALFPQFIMPQQPQLMQYIVLGVTTIVVDIIVMIGYATLAQRIALWIKGPKQMKALNKIFGSLFMLVGALLASARHA</sequence>
<accession>P0AG35</accession>
<accession>P27847</accession>
<name>RHTB_ECOL6</name>
<feature type="chain" id="PRO_0000094732" description="Homoserine/homoserine lactone efflux protein">
    <location>
        <begin position="1"/>
        <end position="206"/>
    </location>
</feature>
<feature type="transmembrane region" description="Helical" evidence="2">
    <location>
        <begin position="5"/>
        <end position="25"/>
    </location>
</feature>
<feature type="transmembrane region" description="Helical" evidence="2">
    <location>
        <begin position="45"/>
        <end position="65"/>
    </location>
</feature>
<feature type="transmembrane region" description="Helical" evidence="2">
    <location>
        <begin position="68"/>
        <end position="88"/>
    </location>
</feature>
<feature type="transmembrane region" description="Helical" evidence="2">
    <location>
        <begin position="117"/>
        <end position="137"/>
    </location>
</feature>
<feature type="transmembrane region" description="Helical" evidence="2">
    <location>
        <begin position="148"/>
        <end position="168"/>
    </location>
</feature>
<feature type="transmembrane region" description="Helical" evidence="2">
    <location>
        <begin position="182"/>
        <end position="202"/>
    </location>
</feature>
<reference key="1">
    <citation type="journal article" date="2002" name="Proc. Natl. Acad. Sci. U.S.A.">
        <title>Extensive mosaic structure revealed by the complete genome sequence of uropathogenic Escherichia coli.</title>
        <authorList>
            <person name="Welch R.A."/>
            <person name="Burland V."/>
            <person name="Plunkett G. III"/>
            <person name="Redford P."/>
            <person name="Roesch P."/>
            <person name="Rasko D."/>
            <person name="Buckles E.L."/>
            <person name="Liou S.-R."/>
            <person name="Boutin A."/>
            <person name="Hackett J."/>
            <person name="Stroud D."/>
            <person name="Mayhew G.F."/>
            <person name="Rose D.J."/>
            <person name="Zhou S."/>
            <person name="Schwartz D.C."/>
            <person name="Perna N.T."/>
            <person name="Mobley H.L.T."/>
            <person name="Donnenberg M.S."/>
            <person name="Blattner F.R."/>
        </authorList>
    </citation>
    <scope>NUCLEOTIDE SEQUENCE [LARGE SCALE GENOMIC DNA]</scope>
    <source>
        <strain>CFT073 / ATCC 700928 / UPEC</strain>
    </source>
</reference>
<dbReference type="EMBL" id="AE014075">
    <property type="protein sequence ID" value="AAN83179.1"/>
    <property type="molecule type" value="Genomic_DNA"/>
</dbReference>
<dbReference type="RefSeq" id="WP_000171710.1">
    <property type="nucleotide sequence ID" value="NZ_CP051263.1"/>
</dbReference>
<dbReference type="STRING" id="199310.c4746"/>
<dbReference type="GeneID" id="93778113"/>
<dbReference type="KEGG" id="ecc:c4746"/>
<dbReference type="eggNOG" id="COG1280">
    <property type="taxonomic scope" value="Bacteria"/>
</dbReference>
<dbReference type="HOGENOM" id="CLU_079569_2_1_6"/>
<dbReference type="BioCyc" id="ECOL199310:C4746-MONOMER"/>
<dbReference type="Proteomes" id="UP000001410">
    <property type="component" value="Chromosome"/>
</dbReference>
<dbReference type="GO" id="GO:0005886">
    <property type="term" value="C:plasma membrane"/>
    <property type="evidence" value="ECO:0007669"/>
    <property type="project" value="UniProtKB-SubCell"/>
</dbReference>
<dbReference type="GO" id="GO:0042970">
    <property type="term" value="F:homoserine transmembrane transporter activity"/>
    <property type="evidence" value="ECO:0007669"/>
    <property type="project" value="TreeGrafter"/>
</dbReference>
<dbReference type="InterPro" id="IPR004778">
    <property type="entry name" value="Homoserine/Threonine_efflux"/>
</dbReference>
<dbReference type="InterPro" id="IPR001123">
    <property type="entry name" value="LeuE-type"/>
</dbReference>
<dbReference type="NCBIfam" id="TIGR00949">
    <property type="entry name" value="2A76"/>
    <property type="match status" value="1"/>
</dbReference>
<dbReference type="NCBIfam" id="NF007812">
    <property type="entry name" value="PRK10520.1"/>
    <property type="match status" value="1"/>
</dbReference>
<dbReference type="PANTHER" id="PTHR30086">
    <property type="entry name" value="ARGININE EXPORTER PROTEIN ARGO"/>
    <property type="match status" value="1"/>
</dbReference>
<dbReference type="PANTHER" id="PTHR30086:SF14">
    <property type="entry name" value="HOMOSERINE_HOMOSERINE LACTONE EFFLUX PROTEIN"/>
    <property type="match status" value="1"/>
</dbReference>
<dbReference type="Pfam" id="PF01810">
    <property type="entry name" value="LysE"/>
    <property type="match status" value="1"/>
</dbReference>
<dbReference type="PIRSF" id="PIRSF006324">
    <property type="entry name" value="LeuE"/>
    <property type="match status" value="1"/>
</dbReference>